<dbReference type="EMBL" id="AF166114">
    <property type="protein sequence ID" value="AAF43853.1"/>
    <property type="molecule type" value="Genomic_DNA"/>
</dbReference>
<dbReference type="RefSeq" id="NP_038413.1">
    <property type="nucleotide sequence ID" value="NC_002186.1"/>
</dbReference>
<dbReference type="SMR" id="Q9MUP7"/>
<dbReference type="GeneID" id="800952"/>
<dbReference type="GO" id="GO:0009507">
    <property type="term" value="C:chloroplast"/>
    <property type="evidence" value="ECO:0007669"/>
    <property type="project" value="UniProtKB-SubCell"/>
</dbReference>
<dbReference type="GO" id="GO:1990904">
    <property type="term" value="C:ribonucleoprotein complex"/>
    <property type="evidence" value="ECO:0007669"/>
    <property type="project" value="UniProtKB-KW"/>
</dbReference>
<dbReference type="GO" id="GO:0005840">
    <property type="term" value="C:ribosome"/>
    <property type="evidence" value="ECO:0007669"/>
    <property type="project" value="UniProtKB-KW"/>
</dbReference>
<dbReference type="GO" id="GO:0019843">
    <property type="term" value="F:rRNA binding"/>
    <property type="evidence" value="ECO:0007669"/>
    <property type="project" value="UniProtKB-UniRule"/>
</dbReference>
<dbReference type="GO" id="GO:0003735">
    <property type="term" value="F:structural constituent of ribosome"/>
    <property type="evidence" value="ECO:0007669"/>
    <property type="project" value="InterPro"/>
</dbReference>
<dbReference type="GO" id="GO:0000027">
    <property type="term" value="P:ribosomal large subunit assembly"/>
    <property type="evidence" value="ECO:0007669"/>
    <property type="project" value="UniProtKB-UniRule"/>
</dbReference>
<dbReference type="GO" id="GO:0006412">
    <property type="term" value="P:translation"/>
    <property type="evidence" value="ECO:0007669"/>
    <property type="project" value="InterPro"/>
</dbReference>
<dbReference type="CDD" id="cd07026">
    <property type="entry name" value="Ribosomal_L20"/>
    <property type="match status" value="1"/>
</dbReference>
<dbReference type="FunFam" id="1.10.1900.20:FF:000001">
    <property type="entry name" value="50S ribosomal protein L20"/>
    <property type="match status" value="1"/>
</dbReference>
<dbReference type="Gene3D" id="6.10.160.10">
    <property type="match status" value="1"/>
</dbReference>
<dbReference type="Gene3D" id="1.10.1900.20">
    <property type="entry name" value="Ribosomal protein L20"/>
    <property type="match status" value="1"/>
</dbReference>
<dbReference type="HAMAP" id="MF_00382">
    <property type="entry name" value="Ribosomal_bL20"/>
    <property type="match status" value="1"/>
</dbReference>
<dbReference type="InterPro" id="IPR005813">
    <property type="entry name" value="Ribosomal_bL20"/>
</dbReference>
<dbReference type="InterPro" id="IPR049946">
    <property type="entry name" value="RIBOSOMAL_L20_CS"/>
</dbReference>
<dbReference type="InterPro" id="IPR035566">
    <property type="entry name" value="Ribosomal_protein_bL20_C"/>
</dbReference>
<dbReference type="NCBIfam" id="TIGR01032">
    <property type="entry name" value="rplT_bact"/>
    <property type="match status" value="1"/>
</dbReference>
<dbReference type="PANTHER" id="PTHR10986">
    <property type="entry name" value="39S RIBOSOMAL PROTEIN L20"/>
    <property type="match status" value="1"/>
</dbReference>
<dbReference type="Pfam" id="PF00453">
    <property type="entry name" value="Ribosomal_L20"/>
    <property type="match status" value="1"/>
</dbReference>
<dbReference type="PRINTS" id="PR00062">
    <property type="entry name" value="RIBOSOMALL20"/>
</dbReference>
<dbReference type="SUPFAM" id="SSF74731">
    <property type="entry name" value="Ribosomal protein L20"/>
    <property type="match status" value="1"/>
</dbReference>
<dbReference type="PROSITE" id="PS00937">
    <property type="entry name" value="RIBOSOMAL_L20"/>
    <property type="match status" value="1"/>
</dbReference>
<sequence length="115" mass="13363">MTRVKRGNVARKHRNKILNLAKGFRGAHSVLFRTANQQIIKSLRYAYRDRARKKRDFRKLWIARINAASRQNNISYSQLINQLKTSNILLNRKILAQIALLDGPVFSQIVMESNS</sequence>
<gene>
    <name type="primary">rpl20</name>
</gene>
<organism>
    <name type="scientific">Mesostigma viride</name>
    <name type="common">Green alga</name>
    <dbReference type="NCBI Taxonomy" id="41882"/>
    <lineage>
        <taxon>Eukaryota</taxon>
        <taxon>Viridiplantae</taxon>
        <taxon>Streptophyta</taxon>
        <taxon>Mesostigmatophyceae</taxon>
        <taxon>Mesostigmatales</taxon>
        <taxon>Mesostigmataceae</taxon>
        <taxon>Mesostigma</taxon>
    </lineage>
</organism>
<keyword id="KW-0150">Chloroplast</keyword>
<keyword id="KW-0934">Plastid</keyword>
<keyword id="KW-0687">Ribonucleoprotein</keyword>
<keyword id="KW-0689">Ribosomal protein</keyword>
<keyword id="KW-0694">RNA-binding</keyword>
<keyword id="KW-0699">rRNA-binding</keyword>
<proteinExistence type="inferred from homology"/>
<comment type="function">
    <text evidence="1">Binds directly to 23S ribosomal RNA and is necessary for the in vitro assembly process of the 50S ribosomal subunit. It is not involved in the protein synthesizing functions of that subunit (By similarity).</text>
</comment>
<comment type="subcellular location">
    <subcellularLocation>
        <location>Plastid</location>
        <location>Chloroplast</location>
    </subcellularLocation>
</comment>
<comment type="similarity">
    <text evidence="2">Belongs to the bacterial ribosomal protein bL20 family.</text>
</comment>
<evidence type="ECO:0000250" key="1"/>
<evidence type="ECO:0000305" key="2"/>
<name>RK20_MESVI</name>
<protein>
    <recommendedName>
        <fullName evidence="2">Large ribosomal subunit protein bL20c</fullName>
    </recommendedName>
    <alternativeName>
        <fullName>50S ribosomal protein L20, chloroplastic</fullName>
    </alternativeName>
</protein>
<feature type="chain" id="PRO_0000177295" description="Large ribosomal subunit protein bL20c">
    <location>
        <begin position="1"/>
        <end position="115"/>
    </location>
</feature>
<accession>Q9MUP7</accession>
<reference key="1">
    <citation type="journal article" date="2000" name="Nature">
        <title>Ancestral chloroplast genome in Mesostigma viride reveals an early branch of green plant evolution.</title>
        <authorList>
            <person name="Lemieux C."/>
            <person name="Otis C."/>
            <person name="Turmel M."/>
        </authorList>
    </citation>
    <scope>NUCLEOTIDE SEQUENCE [LARGE SCALE GENOMIC DNA]</scope>
    <source>
        <strain>NIES-296 / KY-14 / CCMP 2046</strain>
    </source>
</reference>
<geneLocation type="chloroplast"/>